<accession>Q7MFU0</accession>
<reference key="1">
    <citation type="journal article" date="2003" name="Genome Res.">
        <title>Comparative genome analysis of Vibrio vulnificus, a marine pathogen.</title>
        <authorList>
            <person name="Chen C.-Y."/>
            <person name="Wu K.-M."/>
            <person name="Chang Y.-C."/>
            <person name="Chang C.-H."/>
            <person name="Tsai H.-C."/>
            <person name="Liao T.-L."/>
            <person name="Liu Y.-M."/>
            <person name="Chen H.-J."/>
            <person name="Shen A.B.-T."/>
            <person name="Li J.-C."/>
            <person name="Su T.-L."/>
            <person name="Shao C.-P."/>
            <person name="Lee C.-T."/>
            <person name="Hor L.-I."/>
            <person name="Tsai S.-F."/>
        </authorList>
    </citation>
    <scope>NUCLEOTIDE SEQUENCE [LARGE SCALE GENOMIC DNA]</scope>
    <source>
        <strain>YJ016</strain>
    </source>
</reference>
<name>RLMC_VIBVY</name>
<organism>
    <name type="scientific">Vibrio vulnificus (strain YJ016)</name>
    <dbReference type="NCBI Taxonomy" id="196600"/>
    <lineage>
        <taxon>Bacteria</taxon>
        <taxon>Pseudomonadati</taxon>
        <taxon>Pseudomonadota</taxon>
        <taxon>Gammaproteobacteria</taxon>
        <taxon>Vibrionales</taxon>
        <taxon>Vibrionaceae</taxon>
        <taxon>Vibrio</taxon>
    </lineage>
</organism>
<dbReference type="EC" id="2.1.1.189" evidence="1"/>
<dbReference type="EMBL" id="BA000038">
    <property type="protein sequence ID" value="BAC96255.1"/>
    <property type="status" value="ALT_INIT"/>
    <property type="molecule type" value="Genomic_DNA"/>
</dbReference>
<dbReference type="RefSeq" id="WP_011151650.1">
    <property type="nucleotide sequence ID" value="NC_005140.1"/>
</dbReference>
<dbReference type="SMR" id="Q7MFU0"/>
<dbReference type="STRING" id="672.VV93_v1c32180"/>
<dbReference type="KEGG" id="vvy:VVA0229"/>
<dbReference type="PATRIC" id="fig|196600.6.peg.3442"/>
<dbReference type="eggNOG" id="COG2265">
    <property type="taxonomic scope" value="Bacteria"/>
</dbReference>
<dbReference type="HOGENOM" id="CLU_014689_0_0_6"/>
<dbReference type="Proteomes" id="UP000002675">
    <property type="component" value="Chromosome II"/>
</dbReference>
<dbReference type="GO" id="GO:0051539">
    <property type="term" value="F:4 iron, 4 sulfur cluster binding"/>
    <property type="evidence" value="ECO:0007669"/>
    <property type="project" value="UniProtKB-KW"/>
</dbReference>
<dbReference type="GO" id="GO:0005506">
    <property type="term" value="F:iron ion binding"/>
    <property type="evidence" value="ECO:0007669"/>
    <property type="project" value="UniProtKB-UniRule"/>
</dbReference>
<dbReference type="GO" id="GO:0070041">
    <property type="term" value="F:rRNA (uridine-C5-)-methyltransferase activity"/>
    <property type="evidence" value="ECO:0007669"/>
    <property type="project" value="UniProtKB-UniRule"/>
</dbReference>
<dbReference type="GO" id="GO:0070475">
    <property type="term" value="P:rRNA base methylation"/>
    <property type="evidence" value="ECO:0007669"/>
    <property type="project" value="TreeGrafter"/>
</dbReference>
<dbReference type="Gene3D" id="2.40.50.1070">
    <property type="match status" value="1"/>
</dbReference>
<dbReference type="Gene3D" id="3.40.50.150">
    <property type="entry name" value="Vaccinia Virus protein VP39"/>
    <property type="match status" value="1"/>
</dbReference>
<dbReference type="HAMAP" id="MF_01012">
    <property type="entry name" value="23SrRNA_methyltr_RlmC"/>
    <property type="match status" value="1"/>
</dbReference>
<dbReference type="InterPro" id="IPR011825">
    <property type="entry name" value="23SrRNA_MeTrfase_RlmC"/>
</dbReference>
<dbReference type="InterPro" id="IPR030390">
    <property type="entry name" value="MeTrfase_TrmA_AS"/>
</dbReference>
<dbReference type="InterPro" id="IPR029063">
    <property type="entry name" value="SAM-dependent_MTases_sf"/>
</dbReference>
<dbReference type="InterPro" id="IPR010280">
    <property type="entry name" value="U5_MeTrfase_fam"/>
</dbReference>
<dbReference type="NCBIfam" id="TIGR02085">
    <property type="entry name" value="meth_trns_rumB"/>
    <property type="match status" value="1"/>
</dbReference>
<dbReference type="NCBIfam" id="TIGR00479">
    <property type="entry name" value="rumA"/>
    <property type="match status" value="1"/>
</dbReference>
<dbReference type="PANTHER" id="PTHR11061">
    <property type="entry name" value="RNA M5U METHYLTRANSFERASE"/>
    <property type="match status" value="1"/>
</dbReference>
<dbReference type="PANTHER" id="PTHR11061:SF30">
    <property type="entry name" value="TRNA (URACIL(54)-C(5))-METHYLTRANSFERASE"/>
    <property type="match status" value="1"/>
</dbReference>
<dbReference type="Pfam" id="PF05958">
    <property type="entry name" value="tRNA_U5-meth_tr"/>
    <property type="match status" value="1"/>
</dbReference>
<dbReference type="SUPFAM" id="SSF53335">
    <property type="entry name" value="S-adenosyl-L-methionine-dependent methyltransferases"/>
    <property type="match status" value="1"/>
</dbReference>
<dbReference type="PROSITE" id="PS51687">
    <property type="entry name" value="SAM_MT_RNA_M5U"/>
    <property type="match status" value="1"/>
</dbReference>
<dbReference type="PROSITE" id="PS01230">
    <property type="entry name" value="TRMA_1"/>
    <property type="match status" value="1"/>
</dbReference>
<comment type="function">
    <text evidence="1">Catalyzes the formation of 5-methyl-uridine at position 747 (m5U747) in 23S rRNA.</text>
</comment>
<comment type="catalytic activity">
    <reaction evidence="1">
        <text>uridine(747) in 23S rRNA + S-adenosyl-L-methionine = 5-methyluridine(747) in 23S rRNA + S-adenosyl-L-homocysteine + H(+)</text>
        <dbReference type="Rhea" id="RHEA:42628"/>
        <dbReference type="Rhea" id="RHEA-COMP:10154"/>
        <dbReference type="Rhea" id="RHEA-COMP:10155"/>
        <dbReference type="ChEBI" id="CHEBI:15378"/>
        <dbReference type="ChEBI" id="CHEBI:57856"/>
        <dbReference type="ChEBI" id="CHEBI:59789"/>
        <dbReference type="ChEBI" id="CHEBI:65315"/>
        <dbReference type="ChEBI" id="CHEBI:74447"/>
        <dbReference type="EC" id="2.1.1.189"/>
    </reaction>
</comment>
<comment type="similarity">
    <text evidence="1">Belongs to the class I-like SAM-binding methyltransferase superfamily. RNA M5U methyltransferase family. RlmC subfamily.</text>
</comment>
<comment type="sequence caution" evidence="2">
    <conflict type="erroneous initiation">
        <sequence resource="EMBL-CDS" id="BAC96255"/>
    </conflict>
</comment>
<evidence type="ECO:0000255" key="1">
    <source>
        <dbReference type="HAMAP-Rule" id="MF_01012"/>
    </source>
</evidence>
<evidence type="ECO:0000305" key="2"/>
<keyword id="KW-0004">4Fe-4S</keyword>
<keyword id="KW-0408">Iron</keyword>
<keyword id="KW-0411">Iron-sulfur</keyword>
<keyword id="KW-0479">Metal-binding</keyword>
<keyword id="KW-0489">Methyltransferase</keyword>
<keyword id="KW-0698">rRNA processing</keyword>
<keyword id="KW-0949">S-adenosyl-L-methionine</keyword>
<keyword id="KW-0808">Transferase</keyword>
<feature type="chain" id="PRO_0000161940" description="23S rRNA (uracil(747)-C(5))-methyltransferase RlmC">
    <location>
        <begin position="1"/>
        <end position="376"/>
    </location>
</feature>
<feature type="active site" description="Nucleophile" evidence="1">
    <location>
        <position position="335"/>
    </location>
</feature>
<feature type="binding site" evidence="1">
    <location>
        <position position="3"/>
    </location>
    <ligand>
        <name>[4Fe-4S] cluster</name>
        <dbReference type="ChEBI" id="CHEBI:49883"/>
    </ligand>
</feature>
<feature type="binding site" evidence="1">
    <location>
        <position position="11"/>
    </location>
    <ligand>
        <name>[4Fe-4S] cluster</name>
        <dbReference type="ChEBI" id="CHEBI:49883"/>
    </ligand>
</feature>
<feature type="binding site" evidence="1">
    <location>
        <position position="14"/>
    </location>
    <ligand>
        <name>[4Fe-4S] cluster</name>
        <dbReference type="ChEBI" id="CHEBI:49883"/>
    </ligand>
</feature>
<feature type="binding site" evidence="1">
    <location>
        <position position="88"/>
    </location>
    <ligand>
        <name>[4Fe-4S] cluster</name>
        <dbReference type="ChEBI" id="CHEBI:49883"/>
    </ligand>
</feature>
<feature type="binding site" evidence="1">
    <location>
        <position position="213"/>
    </location>
    <ligand>
        <name>S-adenosyl-L-methionine</name>
        <dbReference type="ChEBI" id="CHEBI:59789"/>
    </ligand>
</feature>
<feature type="binding site" evidence="1">
    <location>
        <position position="242"/>
    </location>
    <ligand>
        <name>S-adenosyl-L-methionine</name>
        <dbReference type="ChEBI" id="CHEBI:59789"/>
    </ligand>
</feature>
<feature type="binding site" evidence="1">
    <location>
        <position position="263"/>
    </location>
    <ligand>
        <name>S-adenosyl-L-methionine</name>
        <dbReference type="ChEBI" id="CHEBI:59789"/>
    </ligand>
</feature>
<feature type="binding site" evidence="1">
    <location>
        <position position="308"/>
    </location>
    <ligand>
        <name>S-adenosyl-L-methionine</name>
        <dbReference type="ChEBI" id="CHEBI:59789"/>
    </ligand>
</feature>
<protein>
    <recommendedName>
        <fullName evidence="1">23S rRNA (uracil(747)-C(5))-methyltransferase RlmC</fullName>
        <ecNumber evidence="1">2.1.1.189</ecNumber>
    </recommendedName>
    <alternativeName>
        <fullName evidence="1">23S rRNA(m5U747)-methyltransferase</fullName>
    </alternativeName>
</protein>
<sequence>MSCPYFEQKSCTSCTHMNTPYSQQLETKDNALRTLFSDVAQSAWLAPVQSDSMHCRNKAKMVALGAAHQPTLGIESVQDGTPISLVHCPLYTQDSQALLAYLQEWIRTSGIPPYNKVKKKGELKFVLLTRSQARGEFMLRFVVRSEAALERIRHNLPRLQQAFPAVRVISANIQPIHMARLEGEQEIFLTDAHYLLEEFNGVPMVVRPKSFFQTNPHVAAQLYATARDWVAELKPRQMWDLFCGVGGFALHCAPHAEQVIGIEIEEEAINSAKLSAQQLGIGNLRFSALDSAAYSQAQTQAADLILVNPPRRGLGQALSEQLEQLAPQYLIYSSCNPVTMQQDLAHLPSYQVERAQWFDMFPHTDHAEVMMLLVRQ</sequence>
<proteinExistence type="inferred from homology"/>
<gene>
    <name evidence="1" type="primary">rlmC</name>
    <name type="synonym">rumB</name>
    <name type="ordered locus">VVA0229</name>
</gene>